<proteinExistence type="evidence at protein level"/>
<keyword id="KW-0002">3D-structure</keyword>
<keyword id="KW-0131">Cell cycle</keyword>
<keyword id="KW-0132">Cell division</keyword>
<keyword id="KW-0963">Cytoplasm</keyword>
<keyword id="KW-0498">Mitosis</keyword>
<keyword id="KW-0539">Nucleus</keyword>
<keyword id="KW-0597">Phosphoprotein</keyword>
<keyword id="KW-1185">Reference proteome</keyword>
<keyword id="KW-0677">Repeat</keyword>
<keyword id="KW-0802">TPR repeat</keyword>
<keyword id="KW-0833">Ubl conjugation pathway</keyword>
<organism>
    <name type="scientific">Saccharomyces cerevisiae (strain ATCC 204508 / S288c)</name>
    <name type="common">Baker's yeast</name>
    <dbReference type="NCBI Taxonomy" id="559292"/>
    <lineage>
        <taxon>Eukaryota</taxon>
        <taxon>Fungi</taxon>
        <taxon>Dikarya</taxon>
        <taxon>Ascomycota</taxon>
        <taxon>Saccharomycotina</taxon>
        <taxon>Saccharomycetes</taxon>
        <taxon>Saccharomycetales</taxon>
        <taxon>Saccharomycetaceae</taxon>
        <taxon>Saccharomyces</taxon>
    </lineage>
</organism>
<comment type="function">
    <text evidence="2 5 7">Component of the anaphase promoting complex/cyclosome (APC/C), a cell cycle-regulated E3 ubiquitin-protein ligase complex that controls progression through mitosis and the G1 phase of the cell cycle. The APC/C is thought to confer substrate specificity and, in the presence of ubiquitin-conjugating E2 enzymes, it catalyzes the formation of protein-ubiquitin conjugates that are subsequently degraded by the 26S proteasome. In early mitosis, the APC/C is activated by CDC20 and targets securin PDS1, the B-type cyclin CLB5, and other anaphase inhibitory proteins for proteolysis, thereby triggering the separation of sister chromatids at the metaphase-to-anaphase transition. In late mitosis and in G1, degradation of CLB5 allows activation of the APC/C by CDH1, which is needed to destroy CDC20 and the B-type cyclin CLB2 to allow exit from mitosis and creating the low CDK state necessary for cytokinesis and for reforming prereplicative complexes in G1 prior to another round of replication.</text>
</comment>
<comment type="pathway">
    <text>Protein modification; protein ubiquitination.</text>
</comment>
<comment type="subunit">
    <text evidence="5 7">The APC/C is composed of at least 13 subunits that stay tightly associated throughout the cell cycle: APC1, APC2, APC4, APC5, APC9, APC11, CDC16, CDC23, CDC26, CDC27, DOC1, MND2 and SWM1.</text>
</comment>
<comment type="interaction">
    <interactant intactId="EBI-4249">
        <id>P38042</id>
    </interactant>
    <interactant intactId="EBI-2603">
        <id>P53068</id>
        <label>DOC1</label>
    </interactant>
    <organismsDiffer>false</organismsDiffer>
    <experiments>5</experiments>
</comment>
<comment type="subcellular location">
    <subcellularLocation>
        <location evidence="3">Cytoplasm</location>
    </subcellularLocation>
    <subcellularLocation>
        <location evidence="3">Nucleus</location>
    </subcellularLocation>
</comment>
<comment type="PTM">
    <text evidence="2">Phosphorylated by CDC28, which is required for the early mitotic activity of the APC/C in its CDC20-bound form.</text>
</comment>
<comment type="miscellaneous">
    <text evidence="4">Present with 593 molecules/cell in log phase SD medium.</text>
</comment>
<comment type="similarity">
    <text evidence="8">Belongs to the APC3/CDC27 family.</text>
</comment>
<comment type="sequence caution" evidence="8">
    <conflict type="erroneous initiation">
        <sequence resource="EMBL-CDS" id="CAA56022"/>
    </conflict>
</comment>
<accession>P38042</accession>
<accession>D6VPS0</accession>
<gene>
    <name type="primary">CDC27</name>
    <name type="synonym">APC3</name>
    <name type="synonym">SNB1</name>
    <name type="ordered locus">YBL084C</name>
    <name type="ORF">YBL0718</name>
</gene>
<reference key="1">
    <citation type="journal article" date="1995" name="Yeast">
        <title>Sequence analysis of a 78.6 kb segment of the left end of Saccharomyces cerevisiae chromosome II.</title>
        <authorList>
            <person name="Obermaier B."/>
            <person name="Gassenhuber J."/>
            <person name="Piravandi E."/>
            <person name="Domdey H."/>
        </authorList>
    </citation>
    <scope>NUCLEOTIDE SEQUENCE [GENOMIC DNA]</scope>
    <source>
        <strain>ATCC 204508 / S288c</strain>
    </source>
</reference>
<reference key="2">
    <citation type="journal article" date="1994" name="EMBO J.">
        <title>Complete DNA sequence of yeast chromosome II.</title>
        <authorList>
            <person name="Feldmann H."/>
            <person name="Aigle M."/>
            <person name="Aljinovic G."/>
            <person name="Andre B."/>
            <person name="Baclet M.C."/>
            <person name="Barthe C."/>
            <person name="Baur A."/>
            <person name="Becam A.-M."/>
            <person name="Biteau N."/>
            <person name="Boles E."/>
            <person name="Brandt T."/>
            <person name="Brendel M."/>
            <person name="Brueckner M."/>
            <person name="Bussereau F."/>
            <person name="Christiansen C."/>
            <person name="Contreras R."/>
            <person name="Crouzet M."/>
            <person name="Cziepluch C."/>
            <person name="Demolis N."/>
            <person name="Delaveau T."/>
            <person name="Doignon F."/>
            <person name="Domdey H."/>
            <person name="Duesterhus S."/>
            <person name="Dubois E."/>
            <person name="Dujon B."/>
            <person name="El Bakkoury M."/>
            <person name="Entian K.-D."/>
            <person name="Feuermann M."/>
            <person name="Fiers W."/>
            <person name="Fobo G.M."/>
            <person name="Fritz C."/>
            <person name="Gassenhuber J."/>
            <person name="Glansdorff N."/>
            <person name="Goffeau A."/>
            <person name="Grivell L.A."/>
            <person name="de Haan M."/>
            <person name="Hein C."/>
            <person name="Herbert C.J."/>
            <person name="Hollenberg C.P."/>
            <person name="Holmstroem K."/>
            <person name="Jacq C."/>
            <person name="Jacquet M."/>
            <person name="Jauniaux J.-C."/>
            <person name="Jonniaux J.-L."/>
            <person name="Kallesoee T."/>
            <person name="Kiesau P."/>
            <person name="Kirchrath L."/>
            <person name="Koetter P."/>
            <person name="Korol S."/>
            <person name="Liebl S."/>
            <person name="Logghe M."/>
            <person name="Lohan A.J.E."/>
            <person name="Louis E.J."/>
            <person name="Li Z.Y."/>
            <person name="Maat M.J."/>
            <person name="Mallet L."/>
            <person name="Mannhaupt G."/>
            <person name="Messenguy F."/>
            <person name="Miosga T."/>
            <person name="Molemans F."/>
            <person name="Mueller S."/>
            <person name="Nasr F."/>
            <person name="Obermaier B."/>
            <person name="Perea J."/>
            <person name="Pierard A."/>
            <person name="Piravandi E."/>
            <person name="Pohl F.M."/>
            <person name="Pohl T.M."/>
            <person name="Potier S."/>
            <person name="Proft M."/>
            <person name="Purnelle B."/>
            <person name="Ramezani Rad M."/>
            <person name="Rieger M."/>
            <person name="Rose M."/>
            <person name="Schaaff-Gerstenschlaeger I."/>
            <person name="Scherens B."/>
            <person name="Schwarzlose C."/>
            <person name="Skala J."/>
            <person name="Slonimski P.P."/>
            <person name="Smits P.H.M."/>
            <person name="Souciet J.-L."/>
            <person name="Steensma H.Y."/>
            <person name="Stucka R."/>
            <person name="Urrestarazu L.A."/>
            <person name="van der Aart Q.J.M."/>
            <person name="Van Dyck L."/>
            <person name="Vassarotti A."/>
            <person name="Vetter I."/>
            <person name="Vierendeels F."/>
            <person name="Vissers S."/>
            <person name="Wagner G."/>
            <person name="de Wergifosse P."/>
            <person name="Wolfe K.H."/>
            <person name="Zagulski M."/>
            <person name="Zimmermann F.K."/>
            <person name="Mewes H.-W."/>
            <person name="Kleine K."/>
        </authorList>
    </citation>
    <scope>NUCLEOTIDE SEQUENCE [LARGE SCALE GENOMIC DNA]</scope>
    <source>
        <strain>ATCC 204508 / S288c</strain>
    </source>
</reference>
<reference key="3">
    <citation type="journal article" date="2014" name="G3 (Bethesda)">
        <title>The reference genome sequence of Saccharomyces cerevisiae: Then and now.</title>
        <authorList>
            <person name="Engel S.R."/>
            <person name="Dietrich F.S."/>
            <person name="Fisk D.G."/>
            <person name="Binkley G."/>
            <person name="Balakrishnan R."/>
            <person name="Costanzo M.C."/>
            <person name="Dwight S.S."/>
            <person name="Hitz B.C."/>
            <person name="Karra K."/>
            <person name="Nash R.S."/>
            <person name="Weng S."/>
            <person name="Wong E.D."/>
            <person name="Lloyd P."/>
            <person name="Skrzypek M.S."/>
            <person name="Miyasato S.R."/>
            <person name="Simison M."/>
            <person name="Cherry J.M."/>
        </authorList>
    </citation>
    <scope>GENOME REANNOTATION</scope>
    <scope>SEQUENCE REVISION TO 430</scope>
    <source>
        <strain>ATCC 204508 / S288c</strain>
    </source>
</reference>
<reference key="4">
    <citation type="journal article" date="1991" name="Cold Spring Harb. Symp. Quant. Biol.">
        <title>TPR proteins as essential components of the yeast cell cycle.</title>
        <authorList>
            <person name="Sikorski R.S."/>
            <person name="Michaud W.A."/>
            <person name="Wootton J.C."/>
            <person name="Boguski M.S."/>
            <person name="Connelly C."/>
            <person name="Hieter P.A."/>
        </authorList>
    </citation>
    <scope>PARTIAL NUCLEOTIDE SEQUENCE</scope>
    <scope>MUTAGENESIS OF GLY-613</scope>
</reference>
<reference key="5">
    <citation type="journal article" date="1994" name="EMBO J.">
        <title>Cdc16p, Cdc23p and Cdc27p form a complex essential for mitosis.</title>
        <authorList>
            <person name="Lamb J.R."/>
            <person name="Michaud W.A."/>
            <person name="Sikorski R.S."/>
            <person name="Hieter P.A."/>
        </authorList>
    </citation>
    <scope>FUNCTION</scope>
    <scope>SUBUNIT</scope>
    <scope>DOMAINS TPR REPEATS</scope>
    <scope>MUTAGENESIS OF LEU-614</scope>
</reference>
<reference key="6">
    <citation type="journal article" date="2000" name="J. Cell Biol.">
        <title>Phosphorylation by Cdc28 activates the Cdc20-dependent activity of the anaphase-promoting complex.</title>
        <authorList>
            <person name="Rudner A.D."/>
            <person name="Murray A.W."/>
        </authorList>
    </citation>
    <scope>FUNCTION</scope>
    <scope>PHOSPHORYLATION BY CDC28</scope>
    <scope>MUTAGENESIS OF SER-267; THR-304; SER-328; THR-351 AND THR-397</scope>
</reference>
<reference key="7">
    <citation type="journal article" date="2004" name="Mol. Cell. Biol.">
        <title>Swm1/Apc13 is an evolutionarily conserved subunit of the anaphase-promoting complex stabilizing the association of Cdc16 and Cdc27.</title>
        <authorList>
            <person name="Schwickart M."/>
            <person name="Havlis J."/>
            <person name="Habermann B."/>
            <person name="Bogdanova A."/>
            <person name="Camasses A."/>
            <person name="Oelschlaegel T."/>
            <person name="Shevchenko A."/>
            <person name="Zachariae W."/>
        </authorList>
    </citation>
    <scope>FUNCTION</scope>
    <scope>SUBUNIT</scope>
</reference>
<reference key="8">
    <citation type="journal article" date="2003" name="Nature">
        <title>Global analysis of protein localization in budding yeast.</title>
        <authorList>
            <person name="Huh W.-K."/>
            <person name="Falvo J.V."/>
            <person name="Gerke L.C."/>
            <person name="Carroll A.S."/>
            <person name="Howson R.W."/>
            <person name="Weissman J.S."/>
            <person name="O'Shea E.K."/>
        </authorList>
    </citation>
    <scope>SUBCELLULAR LOCATION [LARGE SCALE ANALYSIS]</scope>
</reference>
<reference key="9">
    <citation type="journal article" date="2003" name="Nature">
        <title>Global analysis of protein expression in yeast.</title>
        <authorList>
            <person name="Ghaemmaghami S."/>
            <person name="Huh W.-K."/>
            <person name="Bower K."/>
            <person name="Howson R.W."/>
            <person name="Belle A."/>
            <person name="Dephoure N."/>
            <person name="O'Shea E.K."/>
            <person name="Weissman J.S."/>
        </authorList>
    </citation>
    <scope>LEVEL OF PROTEIN EXPRESSION [LARGE SCALE ANALYSIS]</scope>
</reference>
<dbReference type="EMBL" id="X79489">
    <property type="protein sequence ID" value="CAA56022.1"/>
    <property type="status" value="ALT_INIT"/>
    <property type="molecule type" value="Genomic_DNA"/>
</dbReference>
<dbReference type="EMBL" id="Z35845">
    <property type="protein sequence ID" value="CAA84905.1"/>
    <property type="molecule type" value="Genomic_DNA"/>
</dbReference>
<dbReference type="EMBL" id="BK006936">
    <property type="protein sequence ID" value="DAA07040.2"/>
    <property type="molecule type" value="Genomic_DNA"/>
</dbReference>
<dbReference type="PIR" id="S45825">
    <property type="entry name" value="S45825"/>
</dbReference>
<dbReference type="RefSeq" id="NP_009469.2">
    <property type="nucleotide sequence ID" value="NM_001178324.2"/>
</dbReference>
<dbReference type="PDB" id="8A3T">
    <property type="method" value="EM"/>
    <property type="resolution" value="3.50 A"/>
    <property type="chains" value="F/H=1-758"/>
</dbReference>
<dbReference type="PDB" id="8A5Y">
    <property type="method" value="EM"/>
    <property type="resolution" value="4.90 A"/>
    <property type="chains" value="F/H=1-758"/>
</dbReference>
<dbReference type="PDB" id="8A61">
    <property type="method" value="EM"/>
    <property type="resolution" value="5.40 A"/>
    <property type="chains" value="F/H=1-758"/>
</dbReference>
<dbReference type="PDBsum" id="8A3T"/>
<dbReference type="PDBsum" id="8A5Y"/>
<dbReference type="PDBsum" id="8A61"/>
<dbReference type="EMDB" id="EMD-15123"/>
<dbReference type="EMDB" id="EMD-15199"/>
<dbReference type="EMDB" id="EMD-15201"/>
<dbReference type="SMR" id="P38042"/>
<dbReference type="BioGRID" id="32620">
    <property type="interactions" value="412"/>
</dbReference>
<dbReference type="ComplexPortal" id="CPX-756">
    <property type="entry name" value="Anaphase-Promoting core complex"/>
</dbReference>
<dbReference type="ComplexPortal" id="CPX-760">
    <property type="entry name" value="Anaphase-Promoting Complex, CDC20 variant"/>
</dbReference>
<dbReference type="ComplexPortal" id="CPX-761">
    <property type="entry name" value="Anaphase-Promoting Complex, CDH1 variant"/>
</dbReference>
<dbReference type="ComplexPortal" id="CPX-762">
    <property type="entry name" value="Anaphase-Promoting complex AMA1 variant"/>
</dbReference>
<dbReference type="DIP" id="DIP-796N"/>
<dbReference type="ELM" id="P38042"/>
<dbReference type="FunCoup" id="P38042">
    <property type="interactions" value="1071"/>
</dbReference>
<dbReference type="IntAct" id="P38042">
    <property type="interactions" value="44"/>
</dbReference>
<dbReference type="MINT" id="P38042"/>
<dbReference type="STRING" id="4932.YBL084C"/>
<dbReference type="GlyGen" id="P38042">
    <property type="glycosylation" value="1 site, 1 O-linked glycan (1 site)"/>
</dbReference>
<dbReference type="iPTMnet" id="P38042"/>
<dbReference type="PaxDb" id="4932-YBL084C"/>
<dbReference type="PeptideAtlas" id="P38042"/>
<dbReference type="EnsemblFungi" id="YBL084C_mRNA">
    <property type="protein sequence ID" value="YBL084C"/>
    <property type="gene ID" value="YBL084C"/>
</dbReference>
<dbReference type="GeneID" id="852194"/>
<dbReference type="KEGG" id="sce:YBL084C"/>
<dbReference type="AGR" id="SGD:S000000180"/>
<dbReference type="SGD" id="S000000180">
    <property type="gene designation" value="CDC27"/>
</dbReference>
<dbReference type="VEuPathDB" id="FungiDB:YBL084C"/>
<dbReference type="eggNOG" id="KOG1126">
    <property type="taxonomic scope" value="Eukaryota"/>
</dbReference>
<dbReference type="GeneTree" id="ENSGT00950000182950"/>
<dbReference type="HOGENOM" id="CLU_008850_2_0_1"/>
<dbReference type="InParanoid" id="P38042"/>
<dbReference type="OMA" id="WHSPQAW"/>
<dbReference type="OrthoDB" id="329563at2759"/>
<dbReference type="BioCyc" id="YEAST:G3O-28973-MONOMER"/>
<dbReference type="Reactome" id="R-SCE-983168">
    <property type="pathway name" value="Antigen processing: Ubiquitination &amp; Proteasome degradation"/>
</dbReference>
<dbReference type="UniPathway" id="UPA00143"/>
<dbReference type="BioGRID-ORCS" id="852194">
    <property type="hits" value="2 hits in 10 CRISPR screens"/>
</dbReference>
<dbReference type="PRO" id="PR:P38042"/>
<dbReference type="Proteomes" id="UP000002311">
    <property type="component" value="Chromosome II"/>
</dbReference>
<dbReference type="RNAct" id="P38042">
    <property type="molecule type" value="protein"/>
</dbReference>
<dbReference type="GO" id="GO:0005680">
    <property type="term" value="C:anaphase-promoting complex"/>
    <property type="evidence" value="ECO:0000314"/>
    <property type="project" value="SGD"/>
</dbReference>
<dbReference type="GO" id="GO:0005737">
    <property type="term" value="C:cytoplasm"/>
    <property type="evidence" value="ECO:0000318"/>
    <property type="project" value="GO_Central"/>
</dbReference>
<dbReference type="GO" id="GO:0034399">
    <property type="term" value="C:nuclear periphery"/>
    <property type="evidence" value="ECO:0000314"/>
    <property type="project" value="SGD"/>
</dbReference>
<dbReference type="GO" id="GO:0031145">
    <property type="term" value="P:anaphase-promoting complex-dependent catabolic process"/>
    <property type="evidence" value="ECO:0000314"/>
    <property type="project" value="ComplexPortal"/>
</dbReference>
<dbReference type="GO" id="GO:0051301">
    <property type="term" value="P:cell division"/>
    <property type="evidence" value="ECO:0000318"/>
    <property type="project" value="GO_Central"/>
</dbReference>
<dbReference type="GO" id="GO:0007091">
    <property type="term" value="P:metaphase/anaphase transition of mitotic cell cycle"/>
    <property type="evidence" value="ECO:0000318"/>
    <property type="project" value="GO_Central"/>
</dbReference>
<dbReference type="GO" id="GO:0016567">
    <property type="term" value="P:protein ubiquitination"/>
    <property type="evidence" value="ECO:0000314"/>
    <property type="project" value="ComplexPortal"/>
</dbReference>
<dbReference type="GO" id="GO:0051445">
    <property type="term" value="P:regulation of meiotic cell cycle"/>
    <property type="evidence" value="ECO:0000303"/>
    <property type="project" value="ComplexPortal"/>
</dbReference>
<dbReference type="GO" id="GO:0007346">
    <property type="term" value="P:regulation of mitotic cell cycle"/>
    <property type="evidence" value="ECO:0000303"/>
    <property type="project" value="ComplexPortal"/>
</dbReference>
<dbReference type="Gene3D" id="1.25.40.10">
    <property type="entry name" value="Tetratricopeptide repeat domain"/>
    <property type="match status" value="4"/>
</dbReference>
<dbReference type="InterPro" id="IPR011990">
    <property type="entry name" value="TPR-like_helical_dom_sf"/>
</dbReference>
<dbReference type="InterPro" id="IPR019734">
    <property type="entry name" value="TPR_rpt"/>
</dbReference>
<dbReference type="PANTHER" id="PTHR12558">
    <property type="entry name" value="CELL DIVISION CYCLE 16,23,27"/>
    <property type="match status" value="1"/>
</dbReference>
<dbReference type="PANTHER" id="PTHR12558:SF13">
    <property type="entry name" value="CELL DIVISION CYCLE PROTEIN 27 HOMOLOG"/>
    <property type="match status" value="1"/>
</dbReference>
<dbReference type="Pfam" id="PF12895">
    <property type="entry name" value="ANAPC3"/>
    <property type="match status" value="1"/>
</dbReference>
<dbReference type="Pfam" id="PF00515">
    <property type="entry name" value="TPR_1"/>
    <property type="match status" value="2"/>
</dbReference>
<dbReference type="Pfam" id="PF13432">
    <property type="entry name" value="TPR_16"/>
    <property type="match status" value="1"/>
</dbReference>
<dbReference type="Pfam" id="PF13181">
    <property type="entry name" value="TPR_8"/>
    <property type="match status" value="1"/>
</dbReference>
<dbReference type="SMART" id="SM00028">
    <property type="entry name" value="TPR"/>
    <property type="match status" value="8"/>
</dbReference>
<dbReference type="SUPFAM" id="SSF81901">
    <property type="entry name" value="HCP-like"/>
    <property type="match status" value="1"/>
</dbReference>
<dbReference type="SUPFAM" id="SSF48452">
    <property type="entry name" value="TPR-like"/>
    <property type="match status" value="1"/>
</dbReference>
<dbReference type="PROSITE" id="PS50005">
    <property type="entry name" value="TPR"/>
    <property type="match status" value="8"/>
</dbReference>
<dbReference type="PROSITE" id="PS50293">
    <property type="entry name" value="TPR_REGION"/>
    <property type="match status" value="1"/>
</dbReference>
<name>CDC27_YEAST</name>
<protein>
    <recommendedName>
        <fullName>Anaphase-promoting complex subunit CDC27</fullName>
    </recommendedName>
    <alternativeName>
        <fullName>Anaphase-promoting complex subunit 3</fullName>
    </alternativeName>
    <alternativeName>
        <fullName>Cell division control protein 27</fullName>
    </alternativeName>
</protein>
<evidence type="ECO:0000256" key="1">
    <source>
        <dbReference type="SAM" id="MobiDB-lite"/>
    </source>
</evidence>
<evidence type="ECO:0000269" key="2">
    <source>
    </source>
</evidence>
<evidence type="ECO:0000269" key="3">
    <source>
    </source>
</evidence>
<evidence type="ECO:0000269" key="4">
    <source>
    </source>
</evidence>
<evidence type="ECO:0000269" key="5">
    <source>
    </source>
</evidence>
<evidence type="ECO:0000269" key="6">
    <source>
    </source>
</evidence>
<evidence type="ECO:0000269" key="7">
    <source>
    </source>
</evidence>
<evidence type="ECO:0000305" key="8"/>
<evidence type="ECO:0007829" key="9">
    <source>
        <dbReference type="PDB" id="8A3T"/>
    </source>
</evidence>
<feature type="chain" id="PRO_0000106274" description="Anaphase-promoting complex subunit CDC27">
    <location>
        <begin position="1"/>
        <end position="758"/>
    </location>
</feature>
<feature type="repeat" description="TPR 1">
    <location>
        <begin position="154"/>
        <end position="187"/>
    </location>
</feature>
<feature type="repeat" description="TPR 2">
    <location>
        <begin position="472"/>
        <end position="505"/>
    </location>
</feature>
<feature type="repeat" description="TPR 3">
    <location>
        <begin position="540"/>
        <end position="573"/>
    </location>
</feature>
<feature type="repeat" description="TPR 4">
    <location>
        <begin position="574"/>
        <end position="607"/>
    </location>
</feature>
<feature type="repeat" description="TPR 5">
    <location>
        <begin position="608"/>
        <end position="641"/>
    </location>
</feature>
<feature type="repeat" description="TPR 6">
    <location>
        <begin position="642"/>
        <end position="675"/>
    </location>
</feature>
<feature type="repeat" description="TPR 7">
    <location>
        <begin position="676"/>
        <end position="709"/>
    </location>
</feature>
<feature type="repeat" description="TPR 8">
    <location>
        <begin position="710"/>
        <end position="743"/>
    </location>
</feature>
<feature type="region of interest" description="Disordered" evidence="1">
    <location>
        <begin position="218"/>
        <end position="333"/>
    </location>
</feature>
<feature type="region of interest" description="Disordered" evidence="1">
    <location>
        <begin position="350"/>
        <end position="392"/>
    </location>
</feature>
<feature type="compositionally biased region" description="Polar residues" evidence="1">
    <location>
        <begin position="226"/>
        <end position="246"/>
    </location>
</feature>
<feature type="compositionally biased region" description="Low complexity" evidence="1">
    <location>
        <begin position="247"/>
        <end position="289"/>
    </location>
</feature>
<feature type="compositionally biased region" description="Polar residues" evidence="1">
    <location>
        <begin position="290"/>
        <end position="333"/>
    </location>
</feature>
<feature type="compositionally biased region" description="Low complexity" evidence="1">
    <location>
        <begin position="365"/>
        <end position="391"/>
    </location>
</feature>
<feature type="mutagenesis site" description="Abolishes phosphorylation; when associated with A-304; A-328; A-351 and A-397." evidence="2">
    <original>S</original>
    <variation>A</variation>
    <location>
        <position position="267"/>
    </location>
</feature>
<feature type="mutagenesis site" description="Abolishes phosphorylation; when associated with A-267; A-304; A-351 and A-397." evidence="2">
    <original>T</original>
    <variation>A</variation>
    <location>
        <position position="304"/>
    </location>
</feature>
<feature type="mutagenesis site" description="Abolishes phosphorylation; when associated with A-267; A-304; A-328 and A-397." evidence="2">
    <original>S</original>
    <variation>A</variation>
    <location>
        <position position="328"/>
    </location>
</feature>
<feature type="mutagenesis site" description="Abolishes phosphorylation; when associated with A-267; A-304; A-328 and A-304." evidence="2">
    <original>T</original>
    <variation>A</variation>
    <location>
        <position position="351"/>
    </location>
</feature>
<feature type="mutagenesis site" description="Abolishes phosphorylation; when associated with A-304; A-328; A-351 and A-397." evidence="2">
    <original>T</original>
    <variation>A</variation>
    <location>
        <position position="397"/>
    </location>
</feature>
<feature type="mutagenesis site" description="In CDC27-633; G2/M cell cycle arrest at 35 degrees Celsius." evidence="6">
    <original>G</original>
    <variation>D</variation>
    <location>
        <position position="613"/>
    </location>
</feature>
<feature type="mutagenesis site" description="Abolishes interaction with CDC23." evidence="7">
    <original>L</original>
    <variation>GL</variation>
    <location>
        <position position="614"/>
    </location>
</feature>
<feature type="sequence conflict" description="In Ref. 1; CAA56022 and 2; CAA84905." evidence="8" ref="1 2">
    <original>S</original>
    <variation>Q</variation>
    <location>
        <position position="430"/>
    </location>
</feature>
<feature type="helix" evidence="9">
    <location>
        <begin position="25"/>
        <end position="39"/>
    </location>
</feature>
<feature type="helix" evidence="9">
    <location>
        <begin position="45"/>
        <end position="60"/>
    </location>
</feature>
<feature type="strand" evidence="9">
    <location>
        <begin position="62"/>
        <end position="64"/>
    </location>
</feature>
<feature type="helix" evidence="9">
    <location>
        <begin position="65"/>
        <end position="80"/>
    </location>
</feature>
<feature type="helix" evidence="9">
    <location>
        <begin position="84"/>
        <end position="93"/>
    </location>
</feature>
<feature type="turn" evidence="9">
    <location>
        <begin position="94"/>
        <end position="97"/>
    </location>
</feature>
<feature type="helix" evidence="9">
    <location>
        <begin position="99"/>
        <end position="112"/>
    </location>
</feature>
<feature type="helix" evidence="9">
    <location>
        <begin position="116"/>
        <end position="131"/>
    </location>
</feature>
<feature type="helix" evidence="9">
    <location>
        <begin position="155"/>
        <end position="167"/>
    </location>
</feature>
<feature type="helix" evidence="9">
    <location>
        <begin position="170"/>
        <end position="183"/>
    </location>
</feature>
<feature type="helix" evidence="9">
    <location>
        <begin position="188"/>
        <end position="196"/>
    </location>
</feature>
<feature type="helix" evidence="9">
    <location>
        <begin position="203"/>
        <end position="208"/>
    </location>
</feature>
<feature type="helix" evidence="9">
    <location>
        <begin position="433"/>
        <end position="449"/>
    </location>
</feature>
<feature type="helix" evidence="9">
    <location>
        <begin position="452"/>
        <end position="461"/>
    </location>
</feature>
<feature type="helix" evidence="9">
    <location>
        <begin position="465"/>
        <end position="468"/>
    </location>
</feature>
<feature type="helix" evidence="9">
    <location>
        <begin position="472"/>
        <end position="484"/>
    </location>
</feature>
<feature type="helix" evidence="9">
    <location>
        <begin position="489"/>
        <end position="501"/>
    </location>
</feature>
<feature type="helix" evidence="9">
    <location>
        <begin position="510"/>
        <end position="518"/>
    </location>
</feature>
<feature type="helix" evidence="9">
    <location>
        <begin position="523"/>
        <end position="535"/>
    </location>
</feature>
<feature type="helix" evidence="9">
    <location>
        <begin position="540"/>
        <end position="553"/>
    </location>
</feature>
<feature type="helix" evidence="9">
    <location>
        <begin position="557"/>
        <end position="569"/>
    </location>
</feature>
<feature type="helix" evidence="9">
    <location>
        <begin position="574"/>
        <end position="586"/>
    </location>
</feature>
<feature type="helix" evidence="9">
    <location>
        <begin position="590"/>
        <end position="603"/>
    </location>
</feature>
<feature type="helix" evidence="9">
    <location>
        <begin position="608"/>
        <end position="621"/>
    </location>
</feature>
<feature type="helix" evidence="9">
    <location>
        <begin position="624"/>
        <end position="637"/>
    </location>
</feature>
<feature type="helix" evidence="9">
    <location>
        <begin position="642"/>
        <end position="655"/>
    </location>
</feature>
<feature type="helix" evidence="9">
    <location>
        <begin position="658"/>
        <end position="671"/>
    </location>
</feature>
<feature type="strand" evidence="9">
    <location>
        <begin position="672"/>
        <end position="674"/>
    </location>
</feature>
<feature type="helix" evidence="9">
    <location>
        <begin position="676"/>
        <end position="689"/>
    </location>
</feature>
<feature type="helix" evidence="9">
    <location>
        <begin position="692"/>
        <end position="705"/>
    </location>
</feature>
<feature type="helix" evidence="9">
    <location>
        <begin position="710"/>
        <end position="723"/>
    </location>
</feature>
<feature type="helix" evidence="9">
    <location>
        <begin position="726"/>
        <end position="739"/>
    </location>
</feature>
<feature type="helix" evidence="9">
    <location>
        <begin position="744"/>
        <end position="754"/>
    </location>
</feature>
<sequence>MAVNPELAPFTLSRGIPSFDDQALSTIIQLQDCIQQAIQQLNYSTAEFLAELLYAECSILDKSSVYWSDAVYLYALSLFLNKSYHTAFQISKEFKEYHLGIAYIFGRCALQLSQGVNEAILTLLSIINVFSSNSSNTRINMVLNSNLVHIPDLATLNCLLGNLYMKLDHSKEGAFYHSEALAINPYLWESYEAICKMRATVDLKRVFFDIAGKKSNSHNNNAASSFPSTSLSHFEPRSQPSLYSKTNKNGNNNINNNVNTLFQSSNSPPSTSASSFSSIQHFSRSQQQQANTSIRTCQNKNTQTPKNPAINSKTSSALPNNISMNLVSPSSKQPTISSLAKVYNRNKLLTTPPSKLLNNDRNHQNNNNNNNNNNNNNNNNNNNNNNNNIINKTTFKTPRNLYSSTGRLTTSKKNPRSLIISNSILTSDYSITLPEIMYNFALILRSSSQYNSFKAIRLFESQIPSHIKDTMPWCLVQLGKLHFEIINYDMSLKYFNRLKDLQPARVKDMEIFSTLLWHLHDKVKSSNLANGLMDTMPNKPETWCCIGNLLSLQKDHDAAIKAFEKATQLDPNFAYAYTLQGHEHSSNDSSDSAKTCYRKALACDPQHYNAYYGLGTSAMKLGQYEEALLYFEKARSINPVNVVLICCCGGSLEKLGYKEKALQYYELACHLQPTSSLSKYKMGQLLYSMTRYNVALQTFEELVKLVPDDATAHYLLGQTYRIVGRKKDAIKELTVAMNLDPKGNQVIIDELQKCHMQE</sequence>